<proteinExistence type="evidence at protein level"/>
<protein>
    <recommendedName>
        <fullName>Thioredoxin</fullName>
        <shortName>Trx</shortName>
    </recommendedName>
</protein>
<comment type="function">
    <text evidence="1">Participates in various redox reactions through the reversible oxidation of its active center dithiol to a disulfide and catalyzes dithiol-disulfide exchange reactions (By similarity). Plays a role in the reversible S-nitrosylation of cysteine residues in target proteins, and thereby contributes to the response to intracellular nitric oxide. Nitrosylates the active site Cys of CASP3 in response to nitric oxide (NO), and thereby inhibits caspase-3 activity. Induces the FOS/JUN AP-1 DNA binding activity in ionizing radiation (IR) cells through its oxidation/reduction status and stimulates AP-1 transcriptional activity (By similarity).</text>
</comment>
<comment type="subunit">
    <text evidence="1">Homodimer; disulfide-linked. Interacts with TXNIP through the redox-active site. Interacts with MAP3K5 and CASP3. Interacts with APEX1; the interaction stimulates the FOS/JUN AP-1 DNA-binding activity in a redox-dependent manner (By similarity).</text>
</comment>
<comment type="subcellular location">
    <subcellularLocation>
        <location evidence="2">Nucleus</location>
    </subcellularLocation>
    <subcellularLocation>
        <location evidence="2">Cytoplasm</location>
    </subcellularLocation>
    <subcellularLocation>
        <location evidence="2">Secreted</location>
    </subcellularLocation>
    <text evidence="2">Translocates from the cytoplasm into the nucleus after phorbol 12-myristate 13-acetate induction (PMA). Predominantly in the cytoplasm in non irradiated cells. Radiation induces translocation of TRX from the cytoplasm to the nucleus. Secreted by a leaderless secretory pathway.</text>
</comment>
<comment type="similarity">
    <text evidence="5">Belongs to the thioredoxin family.</text>
</comment>
<reference key="1">
    <citation type="submission" date="1997-08" db="UniProtKB">
        <authorList>
            <person name="Dunn M.J."/>
            <person name="Wheeler C.H."/>
        </authorList>
    </citation>
    <scope>PROTEIN SEQUENCE OF 2-21</scope>
    <source>
        <tissue>Heart</tissue>
    </source>
</reference>
<keyword id="KW-0007">Acetylation</keyword>
<keyword id="KW-0010">Activator</keyword>
<keyword id="KW-0963">Cytoplasm</keyword>
<keyword id="KW-0903">Direct protein sequencing</keyword>
<keyword id="KW-0249">Electron transport</keyword>
<keyword id="KW-0539">Nucleus</keyword>
<keyword id="KW-0676">Redox-active center</keyword>
<keyword id="KW-1185">Reference proteome</keyword>
<keyword id="KW-0964">Secreted</keyword>
<keyword id="KW-0804">Transcription</keyword>
<keyword id="KW-0805">Transcription regulation</keyword>
<keyword id="KW-0813">Transport</keyword>
<feature type="initiator methionine" description="Removed" evidence="4">
    <location>
        <position position="1"/>
    </location>
</feature>
<feature type="chain" id="PRO_0000120002" description="Thioredoxin">
    <location>
        <begin position="2"/>
        <end position="21" status="greater than"/>
    </location>
</feature>
<feature type="modified residue" description="N6-acetyllysine" evidence="2">
    <location>
        <position position="3"/>
    </location>
</feature>
<feature type="modified residue" description="N6-succinyllysine" evidence="3">
    <location>
        <position position="8"/>
    </location>
</feature>
<feature type="unsure residue">
    <location>
        <position position="7"/>
    </location>
</feature>
<feature type="non-terminal residue">
    <location>
        <position position="21"/>
    </location>
</feature>
<name>THIO_CANLF</name>
<dbReference type="InParanoid" id="P99505"/>
<dbReference type="OrthoDB" id="2121326at2759"/>
<dbReference type="Proteomes" id="UP000002254">
    <property type="component" value="Unplaced"/>
</dbReference>
<dbReference type="Proteomes" id="UP000694429">
    <property type="component" value="Unplaced"/>
</dbReference>
<dbReference type="Proteomes" id="UP000694542">
    <property type="component" value="Unplaced"/>
</dbReference>
<dbReference type="Proteomes" id="UP000805418">
    <property type="component" value="Unplaced"/>
</dbReference>
<dbReference type="GO" id="GO:0005737">
    <property type="term" value="C:cytoplasm"/>
    <property type="evidence" value="ECO:0007669"/>
    <property type="project" value="UniProtKB-SubCell"/>
</dbReference>
<dbReference type="GO" id="GO:0005576">
    <property type="term" value="C:extracellular region"/>
    <property type="evidence" value="ECO:0007669"/>
    <property type="project" value="UniProtKB-SubCell"/>
</dbReference>
<dbReference type="GO" id="GO:0005634">
    <property type="term" value="C:nucleus"/>
    <property type="evidence" value="ECO:0007669"/>
    <property type="project" value="UniProtKB-SubCell"/>
</dbReference>
<dbReference type="GO" id="GO:0043388">
    <property type="term" value="P:positive regulation of DNA binding"/>
    <property type="evidence" value="ECO:0000250"/>
    <property type="project" value="UniProtKB"/>
</dbReference>
<dbReference type="GO" id="GO:0009314">
    <property type="term" value="P:response to radiation"/>
    <property type="evidence" value="ECO:0000250"/>
    <property type="project" value="UniProtKB"/>
</dbReference>
<evidence type="ECO:0000250" key="1"/>
<evidence type="ECO:0000250" key="2">
    <source>
        <dbReference type="UniProtKB" id="P10599"/>
    </source>
</evidence>
<evidence type="ECO:0000250" key="3">
    <source>
        <dbReference type="UniProtKB" id="P10639"/>
    </source>
</evidence>
<evidence type="ECO:0000269" key="4">
    <source ref="1"/>
</evidence>
<evidence type="ECO:0000305" key="5"/>
<accession>P99505</accession>
<sequence length="21" mass="2418">MVKQIEFKYAFQEALNSAGDK</sequence>
<gene>
    <name type="primary">TXN</name>
</gene>
<organism>
    <name type="scientific">Canis lupus familiaris</name>
    <name type="common">Dog</name>
    <name type="synonym">Canis familiaris</name>
    <dbReference type="NCBI Taxonomy" id="9615"/>
    <lineage>
        <taxon>Eukaryota</taxon>
        <taxon>Metazoa</taxon>
        <taxon>Chordata</taxon>
        <taxon>Craniata</taxon>
        <taxon>Vertebrata</taxon>
        <taxon>Euteleostomi</taxon>
        <taxon>Mammalia</taxon>
        <taxon>Eutheria</taxon>
        <taxon>Laurasiatheria</taxon>
        <taxon>Carnivora</taxon>
        <taxon>Caniformia</taxon>
        <taxon>Canidae</taxon>
        <taxon>Canis</taxon>
    </lineage>
</organism>